<reference key="1">
    <citation type="journal article" date="2005" name="Genome Res.">
        <title>Coping with cold: the genome of the versatile marine Antarctica bacterium Pseudoalteromonas haloplanktis TAC125.</title>
        <authorList>
            <person name="Medigue C."/>
            <person name="Krin E."/>
            <person name="Pascal G."/>
            <person name="Barbe V."/>
            <person name="Bernsel A."/>
            <person name="Bertin P.N."/>
            <person name="Cheung F."/>
            <person name="Cruveiller S."/>
            <person name="D'Amico S."/>
            <person name="Duilio A."/>
            <person name="Fang G."/>
            <person name="Feller G."/>
            <person name="Ho C."/>
            <person name="Mangenot S."/>
            <person name="Marino G."/>
            <person name="Nilsson J."/>
            <person name="Parrilli E."/>
            <person name="Rocha E.P.C."/>
            <person name="Rouy Z."/>
            <person name="Sekowska A."/>
            <person name="Tutino M.L."/>
            <person name="Vallenet D."/>
            <person name="von Heijne G."/>
            <person name="Danchin A."/>
        </authorList>
    </citation>
    <scope>NUCLEOTIDE SEQUENCE [LARGE SCALE GENOMIC DNA]</scope>
    <source>
        <strain>TAC 125</strain>
    </source>
</reference>
<evidence type="ECO:0000255" key="1">
    <source>
        <dbReference type="HAMAP-Rule" id="MF_01703"/>
    </source>
</evidence>
<organism>
    <name type="scientific">Pseudoalteromonas translucida (strain TAC 125)</name>
    <dbReference type="NCBI Taxonomy" id="326442"/>
    <lineage>
        <taxon>Bacteria</taxon>
        <taxon>Pseudomonadati</taxon>
        <taxon>Pseudomonadota</taxon>
        <taxon>Gammaproteobacteria</taxon>
        <taxon>Alteromonadales</taxon>
        <taxon>Pseudoalteromonadaceae</taxon>
        <taxon>Pseudoalteromonas</taxon>
    </lineage>
</organism>
<name>MSBA_PSET1</name>
<keyword id="KW-0067">ATP-binding</keyword>
<keyword id="KW-0997">Cell inner membrane</keyword>
<keyword id="KW-1003">Cell membrane</keyword>
<keyword id="KW-0445">Lipid transport</keyword>
<keyword id="KW-0472">Membrane</keyword>
<keyword id="KW-0547">Nucleotide-binding</keyword>
<keyword id="KW-1185">Reference proteome</keyword>
<keyword id="KW-1278">Translocase</keyword>
<keyword id="KW-0812">Transmembrane</keyword>
<keyword id="KW-1133">Transmembrane helix</keyword>
<keyword id="KW-0813">Transport</keyword>
<accession>Q3IGX5</accession>
<protein>
    <recommendedName>
        <fullName evidence="1">ATP-dependent lipid A-core flippase</fullName>
        <ecNumber evidence="1">7.5.2.6</ecNumber>
    </recommendedName>
    <alternativeName>
        <fullName evidence="1">Lipid A export ATP-binding/permease protein MsbA</fullName>
    </alternativeName>
</protein>
<dbReference type="EC" id="7.5.2.6" evidence="1"/>
<dbReference type="EMBL" id="CR954246">
    <property type="protein sequence ID" value="CAI86734.1"/>
    <property type="molecule type" value="Genomic_DNA"/>
</dbReference>
<dbReference type="SMR" id="Q3IGX5"/>
<dbReference type="STRING" id="326442.PSHAa1661"/>
<dbReference type="KEGG" id="pha:PSHAa1661"/>
<dbReference type="PATRIC" id="fig|326442.8.peg.1606"/>
<dbReference type="eggNOG" id="COG1132">
    <property type="taxonomic scope" value="Bacteria"/>
</dbReference>
<dbReference type="HOGENOM" id="CLU_000604_84_3_6"/>
<dbReference type="BioCyc" id="PHAL326442:PSHA_RS08140-MONOMER"/>
<dbReference type="Proteomes" id="UP000006843">
    <property type="component" value="Chromosome I"/>
</dbReference>
<dbReference type="GO" id="GO:0005886">
    <property type="term" value="C:plasma membrane"/>
    <property type="evidence" value="ECO:0007669"/>
    <property type="project" value="UniProtKB-SubCell"/>
</dbReference>
<dbReference type="GO" id="GO:0015421">
    <property type="term" value="F:ABC-type oligopeptide transporter activity"/>
    <property type="evidence" value="ECO:0007669"/>
    <property type="project" value="TreeGrafter"/>
</dbReference>
<dbReference type="GO" id="GO:0005524">
    <property type="term" value="F:ATP binding"/>
    <property type="evidence" value="ECO:0007669"/>
    <property type="project" value="UniProtKB-KW"/>
</dbReference>
<dbReference type="GO" id="GO:0016887">
    <property type="term" value="F:ATP hydrolysis activity"/>
    <property type="evidence" value="ECO:0007669"/>
    <property type="project" value="InterPro"/>
</dbReference>
<dbReference type="GO" id="GO:0034040">
    <property type="term" value="F:ATPase-coupled lipid transmembrane transporter activity"/>
    <property type="evidence" value="ECO:0007669"/>
    <property type="project" value="InterPro"/>
</dbReference>
<dbReference type="CDD" id="cd18552">
    <property type="entry name" value="ABC_6TM_MsbA_like"/>
    <property type="match status" value="1"/>
</dbReference>
<dbReference type="FunFam" id="3.40.50.300:FF:000140">
    <property type="entry name" value="Lipid A export ATP-binding/permease protein MsbA"/>
    <property type="match status" value="1"/>
</dbReference>
<dbReference type="Gene3D" id="1.20.1560.10">
    <property type="entry name" value="ABC transporter type 1, transmembrane domain"/>
    <property type="match status" value="1"/>
</dbReference>
<dbReference type="Gene3D" id="3.40.50.300">
    <property type="entry name" value="P-loop containing nucleotide triphosphate hydrolases"/>
    <property type="match status" value="1"/>
</dbReference>
<dbReference type="InterPro" id="IPR003593">
    <property type="entry name" value="AAA+_ATPase"/>
</dbReference>
<dbReference type="InterPro" id="IPR011527">
    <property type="entry name" value="ABC1_TM_dom"/>
</dbReference>
<dbReference type="InterPro" id="IPR036640">
    <property type="entry name" value="ABC1_TM_sf"/>
</dbReference>
<dbReference type="InterPro" id="IPR003439">
    <property type="entry name" value="ABC_transporter-like_ATP-bd"/>
</dbReference>
<dbReference type="InterPro" id="IPR017871">
    <property type="entry name" value="ABC_transporter-like_CS"/>
</dbReference>
<dbReference type="InterPro" id="IPR011917">
    <property type="entry name" value="ABC_transpr_lipidA"/>
</dbReference>
<dbReference type="InterPro" id="IPR027417">
    <property type="entry name" value="P-loop_NTPase"/>
</dbReference>
<dbReference type="InterPro" id="IPR039421">
    <property type="entry name" value="Type_1_exporter"/>
</dbReference>
<dbReference type="NCBIfam" id="TIGR02203">
    <property type="entry name" value="MsbA_lipidA"/>
    <property type="match status" value="1"/>
</dbReference>
<dbReference type="PANTHER" id="PTHR43394:SF1">
    <property type="entry name" value="ATP-BINDING CASSETTE SUB-FAMILY B MEMBER 10, MITOCHONDRIAL"/>
    <property type="match status" value="1"/>
</dbReference>
<dbReference type="PANTHER" id="PTHR43394">
    <property type="entry name" value="ATP-DEPENDENT PERMEASE MDL1, MITOCHONDRIAL"/>
    <property type="match status" value="1"/>
</dbReference>
<dbReference type="Pfam" id="PF00664">
    <property type="entry name" value="ABC_membrane"/>
    <property type="match status" value="1"/>
</dbReference>
<dbReference type="Pfam" id="PF00005">
    <property type="entry name" value="ABC_tran"/>
    <property type="match status" value="1"/>
</dbReference>
<dbReference type="SMART" id="SM00382">
    <property type="entry name" value="AAA"/>
    <property type="match status" value="1"/>
</dbReference>
<dbReference type="SUPFAM" id="SSF90123">
    <property type="entry name" value="ABC transporter transmembrane region"/>
    <property type="match status" value="1"/>
</dbReference>
<dbReference type="SUPFAM" id="SSF52540">
    <property type="entry name" value="P-loop containing nucleoside triphosphate hydrolases"/>
    <property type="match status" value="1"/>
</dbReference>
<dbReference type="PROSITE" id="PS50929">
    <property type="entry name" value="ABC_TM1F"/>
    <property type="match status" value="1"/>
</dbReference>
<dbReference type="PROSITE" id="PS00211">
    <property type="entry name" value="ABC_TRANSPORTER_1"/>
    <property type="match status" value="1"/>
</dbReference>
<dbReference type="PROSITE" id="PS50893">
    <property type="entry name" value="ABC_TRANSPORTER_2"/>
    <property type="match status" value="1"/>
</dbReference>
<dbReference type="PROSITE" id="PS51239">
    <property type="entry name" value="MSBA"/>
    <property type="match status" value="1"/>
</dbReference>
<sequence>MDQSTTQIYKRLISYVGAYRTVAIVAIIGMIGYSGMDALFIQLMKPFIDEGLNERNADVLKYAPFVVIALVIGRGVFNFMSSYCLSYVGSQVVRSLRQELFEHILHLPVSFHDKNSTGDLISKITFDTEQVQQAITKALLIVVREGAFVVFLLAVMFYTSWQLSLIFLVIIPLVAVIVTVVSKRFRHISKSIQSAMGQVTRSSEQMLSGHKVIHGFGGQNQEIDQFSKVNNHNRQQRIKMDATKALSVSIIQVLAASAMAVILWVVSMPSMIDTISSGDFVVLISSMMMLLRPLKQLANVNSDMQRGVSAAQSVFLILDEEVEKDTGTVSVDKVKGLIEVKNVTFKYPTKDEPVLNNLSLTIKAGESIALVGRSGSGKSTISNLLPRYYDLEAPSEILLDGIALHDYKLTDLRRQFALVSQQVVLFNDSIANNICYGLQREISQQELEKVAKQAHVWEFVKDLPEQLNTMVGENGVMLSGGQRQRIAIARAILKDAPILILDEATSALDTESEKLIQQALEALMKDKTSIVIAHRLSTIENSDRIYVIDNGSVIESGDHLSLLANNGTYSALCKMQFGEQG</sequence>
<gene>
    <name evidence="1" type="primary">msbA</name>
    <name type="ordered locus">PSHAa1661</name>
</gene>
<comment type="function">
    <text evidence="1">Involved in lipopolysaccharide (LPS) biosynthesis. Translocates lipid A-core from the inner to the outer leaflet of the inner membrane. Transmembrane domains (TMD) form a pore in the inner membrane and the ATP-binding domain (NBD) is responsible for energy generation.</text>
</comment>
<comment type="catalytic activity">
    <reaction evidence="1">
        <text>ATP + H2O + lipid A-core oligosaccharideSide 1 = ADP + phosphate + lipid A-core oligosaccharideSide 2.</text>
        <dbReference type="EC" id="7.5.2.6"/>
    </reaction>
</comment>
<comment type="subunit">
    <text evidence="1">Homodimer.</text>
</comment>
<comment type="subcellular location">
    <subcellularLocation>
        <location evidence="1">Cell inner membrane</location>
        <topology evidence="1">Multi-pass membrane protein</topology>
    </subcellularLocation>
</comment>
<comment type="domain">
    <text evidence="1">In MsbA the ATP-binding domain (NBD) and the transmembrane domain (TMD) are fused.</text>
</comment>
<comment type="similarity">
    <text evidence="1">Belongs to the ABC transporter superfamily. Lipid exporter (TC 3.A.1.106) family.</text>
</comment>
<feature type="chain" id="PRO_0000271639" description="ATP-dependent lipid A-core flippase">
    <location>
        <begin position="1"/>
        <end position="581"/>
    </location>
</feature>
<feature type="transmembrane region" description="Helical" evidence="1">
    <location>
        <begin position="21"/>
        <end position="41"/>
    </location>
</feature>
<feature type="transmembrane region" description="Helical" evidence="1">
    <location>
        <begin position="65"/>
        <end position="85"/>
    </location>
</feature>
<feature type="transmembrane region" description="Helical" evidence="1">
    <location>
        <begin position="138"/>
        <end position="158"/>
    </location>
</feature>
<feature type="transmembrane region" description="Helical" evidence="1">
    <location>
        <begin position="161"/>
        <end position="181"/>
    </location>
</feature>
<feature type="transmembrane region" description="Helical" evidence="1">
    <location>
        <begin position="246"/>
        <end position="266"/>
    </location>
</feature>
<feature type="transmembrane region" description="Helical" evidence="1">
    <location>
        <begin position="271"/>
        <end position="291"/>
    </location>
</feature>
<feature type="domain" description="ABC transmembrane type-1" evidence="1">
    <location>
        <begin position="24"/>
        <end position="306"/>
    </location>
</feature>
<feature type="domain" description="ABC transporter" evidence="1">
    <location>
        <begin position="338"/>
        <end position="575"/>
    </location>
</feature>
<feature type="binding site" evidence="1">
    <location>
        <begin position="372"/>
        <end position="379"/>
    </location>
    <ligand>
        <name>ATP</name>
        <dbReference type="ChEBI" id="CHEBI:30616"/>
    </ligand>
</feature>
<proteinExistence type="inferred from homology"/>